<reference key="1">
    <citation type="journal article" date="2004" name="Nature">
        <title>Genome evolution in yeasts.</title>
        <authorList>
            <person name="Dujon B."/>
            <person name="Sherman D."/>
            <person name="Fischer G."/>
            <person name="Durrens P."/>
            <person name="Casaregola S."/>
            <person name="Lafontaine I."/>
            <person name="de Montigny J."/>
            <person name="Marck C."/>
            <person name="Neuveglise C."/>
            <person name="Talla E."/>
            <person name="Goffard N."/>
            <person name="Frangeul L."/>
            <person name="Aigle M."/>
            <person name="Anthouard V."/>
            <person name="Babour A."/>
            <person name="Barbe V."/>
            <person name="Barnay S."/>
            <person name="Blanchin S."/>
            <person name="Beckerich J.-M."/>
            <person name="Beyne E."/>
            <person name="Bleykasten C."/>
            <person name="Boisrame A."/>
            <person name="Boyer J."/>
            <person name="Cattolico L."/>
            <person name="Confanioleri F."/>
            <person name="de Daruvar A."/>
            <person name="Despons L."/>
            <person name="Fabre E."/>
            <person name="Fairhead C."/>
            <person name="Ferry-Dumazet H."/>
            <person name="Groppi A."/>
            <person name="Hantraye F."/>
            <person name="Hennequin C."/>
            <person name="Jauniaux N."/>
            <person name="Joyet P."/>
            <person name="Kachouri R."/>
            <person name="Kerrest A."/>
            <person name="Koszul R."/>
            <person name="Lemaire M."/>
            <person name="Lesur I."/>
            <person name="Ma L."/>
            <person name="Muller H."/>
            <person name="Nicaud J.-M."/>
            <person name="Nikolski M."/>
            <person name="Oztas S."/>
            <person name="Ozier-Kalogeropoulos O."/>
            <person name="Pellenz S."/>
            <person name="Potier S."/>
            <person name="Richard G.-F."/>
            <person name="Straub M.-L."/>
            <person name="Suleau A."/>
            <person name="Swennen D."/>
            <person name="Tekaia F."/>
            <person name="Wesolowski-Louvel M."/>
            <person name="Westhof E."/>
            <person name="Wirth B."/>
            <person name="Zeniou-Meyer M."/>
            <person name="Zivanovic Y."/>
            <person name="Bolotin-Fukuhara M."/>
            <person name="Thierry A."/>
            <person name="Bouchier C."/>
            <person name="Caudron B."/>
            <person name="Scarpelli C."/>
            <person name="Gaillardin C."/>
            <person name="Weissenbach J."/>
            <person name="Wincker P."/>
            <person name="Souciet J.-L."/>
        </authorList>
    </citation>
    <scope>NUCLEOTIDE SEQUENCE [LARGE SCALE GENOMIC DNA]</scope>
    <source>
        <strain>CLIB 122 / E 150</strain>
    </source>
</reference>
<comment type="function">
    <text evidence="1">Required for assembly of cytochrome c oxidase (complex IV).</text>
</comment>
<comment type="subunit">
    <text evidence="1">Component of 250-400 kDa complexes called cytochrome oxidase assembly intermediates or COA complexes.</text>
</comment>
<comment type="subcellular location">
    <subcellularLocation>
        <location>Mitochondrion inner membrane</location>
        <topology>Single-pass membrane protein</topology>
    </subcellularLocation>
</comment>
<comment type="similarity">
    <text evidence="4">Belongs to the COA3 family.</text>
</comment>
<keyword id="KW-0472">Membrane</keyword>
<keyword id="KW-0496">Mitochondrion</keyword>
<keyword id="KW-0999">Mitochondrion inner membrane</keyword>
<keyword id="KW-1185">Reference proteome</keyword>
<keyword id="KW-0812">Transmembrane</keyword>
<keyword id="KW-1133">Transmembrane helix</keyword>
<organism>
    <name type="scientific">Yarrowia lipolytica (strain CLIB 122 / E 150)</name>
    <name type="common">Yeast</name>
    <name type="synonym">Candida lipolytica</name>
    <dbReference type="NCBI Taxonomy" id="284591"/>
    <lineage>
        <taxon>Eukaryota</taxon>
        <taxon>Fungi</taxon>
        <taxon>Dikarya</taxon>
        <taxon>Ascomycota</taxon>
        <taxon>Saccharomycotina</taxon>
        <taxon>Dipodascomycetes</taxon>
        <taxon>Dipodascales</taxon>
        <taxon>Dipodascales incertae sedis</taxon>
        <taxon>Yarrowia</taxon>
    </lineage>
</organism>
<dbReference type="EMBL" id="CR382127">
    <property type="protein sequence ID" value="CAG83699.1"/>
    <property type="molecule type" value="Genomic_DNA"/>
</dbReference>
<dbReference type="RefSeq" id="XP_499774.1">
    <property type="nucleotide sequence ID" value="XM_499774.1"/>
</dbReference>
<dbReference type="SMR" id="Q6CHT7"/>
<dbReference type="FunCoup" id="Q6CHT7">
    <property type="interactions" value="26"/>
</dbReference>
<dbReference type="STRING" id="284591.Q6CHT7"/>
<dbReference type="EnsemblFungi" id="CAG83699">
    <property type="protein sequence ID" value="CAG83699"/>
    <property type="gene ID" value="YALI0_A05137g"/>
</dbReference>
<dbReference type="KEGG" id="yli:2905827"/>
<dbReference type="VEuPathDB" id="FungiDB:YALI0_A05137g"/>
<dbReference type="HOGENOM" id="CLU_153999_0_0_1"/>
<dbReference type="InParanoid" id="Q6CHT7"/>
<dbReference type="OMA" id="NPKTHEM"/>
<dbReference type="OrthoDB" id="103029at4891"/>
<dbReference type="Proteomes" id="UP000001300">
    <property type="component" value="Chromosome A"/>
</dbReference>
<dbReference type="GO" id="GO:0005743">
    <property type="term" value="C:mitochondrial inner membrane"/>
    <property type="evidence" value="ECO:0000318"/>
    <property type="project" value="GO_Central"/>
</dbReference>
<dbReference type="GO" id="GO:0033617">
    <property type="term" value="P:mitochondrial cytochrome c oxidase assembly"/>
    <property type="evidence" value="ECO:0000318"/>
    <property type="project" value="GO_Central"/>
</dbReference>
<dbReference type="InterPro" id="IPR041752">
    <property type="entry name" value="Coa3"/>
</dbReference>
<dbReference type="InterPro" id="IPR018628">
    <property type="entry name" value="Coa3_cc"/>
</dbReference>
<dbReference type="PANTHER" id="PTHR15642:SF3">
    <property type="entry name" value="CYTOCHROME C OXIDASE ASSEMBLY FACTOR 3 HOMOLOG, MITOCHONDRIAL"/>
    <property type="match status" value="1"/>
</dbReference>
<dbReference type="PANTHER" id="PTHR15642">
    <property type="entry name" value="CYTOCHROME C OXIDASE ASSEMBLY FACTOR 3, MITOCHONDRIAL"/>
    <property type="match status" value="1"/>
</dbReference>
<dbReference type="Pfam" id="PF09813">
    <property type="entry name" value="Coa3_cc"/>
    <property type="match status" value="1"/>
</dbReference>
<accession>Q6CHT7</accession>
<evidence type="ECO:0000250" key="1"/>
<evidence type="ECO:0000255" key="2"/>
<evidence type="ECO:0000256" key="3">
    <source>
        <dbReference type="SAM" id="MobiDB-lite"/>
    </source>
</evidence>
<evidence type="ECO:0000305" key="4"/>
<proteinExistence type="inferred from homology"/>
<protein>
    <recommendedName>
        <fullName>Cytochrome c oxidase assembly factor 3, mitochondrial</fullName>
    </recommendedName>
</protein>
<gene>
    <name type="primary">COA3</name>
    <name type="ordered locus">YALI0A05137g</name>
</gene>
<name>COA3_YARLI</name>
<feature type="chain" id="PRO_0000405452" description="Cytochrome c oxidase assembly factor 3, mitochondrial">
    <location>
        <begin position="1"/>
        <end position="106"/>
    </location>
</feature>
<feature type="topological domain" description="Mitochondrial matrix" evidence="1">
    <location>
        <begin position="1"/>
        <end position="48"/>
    </location>
</feature>
<feature type="transmembrane region" description="Helical" evidence="2">
    <location>
        <begin position="49"/>
        <end position="71"/>
    </location>
</feature>
<feature type="topological domain" description="Mitochondrial intermembrane" evidence="1">
    <location>
        <begin position="72"/>
        <end position="106"/>
    </location>
</feature>
<feature type="region of interest" description="Disordered" evidence="3">
    <location>
        <begin position="84"/>
        <end position="106"/>
    </location>
</feature>
<feature type="compositionally biased region" description="Basic and acidic residues" evidence="3">
    <location>
        <begin position="91"/>
        <end position="106"/>
    </location>
</feature>
<sequence>MSQDPHNGKGTFEVHKQPQPGLKVFRKGKYIDPKTFQMSPALIRARRPFFVRNMLALAGLTGFVAGIYGYTMYSLRTDDFGDVPIPPLDPEEIKKLQSKYSDDSKA</sequence>